<organismHost>
    <name type="scientific">Homo sapiens</name>
    <name type="common">Human</name>
    <dbReference type="NCBI Taxonomy" id="9606"/>
</organismHost>
<keyword id="KW-0025">Alternative splicing</keyword>
<keyword id="KW-1048">Host nucleus</keyword>
<keyword id="KW-1185">Reference proteome</keyword>
<proteinExistence type="inferred from homology"/>
<reference key="1">
    <citation type="journal article" date="1994" name="Virology">
        <title>Nucleotide sequence analysis of a 21-kbp region of the genome of human herpesvirus-6 containing homologues of human cytomegalovirus major immediate-early and replication genes.</title>
        <authorList>
            <person name="Nicholas J."/>
        </authorList>
    </citation>
    <scope>NUCLEOTIDE SEQUENCE [GENOMIC DNA]</scope>
</reference>
<reference key="2">
    <citation type="journal article" date="1995" name="Virology">
        <title>The DNA sequence of human herpesvirus-6: structure, coding content, and genome evolution.</title>
        <authorList>
            <person name="Gompels U.A."/>
            <person name="Nicholas J."/>
            <person name="Lawrence G.L."/>
            <person name="Jones M."/>
            <person name="Thomson B.J."/>
            <person name="Martin M.E.D."/>
            <person name="Efstathiou S."/>
            <person name="Craxton M.A."/>
            <person name="Macaulay H.A."/>
        </authorList>
    </citation>
    <scope>NUCLEOTIDE SEQUENCE [LARGE SCALE GENOMIC DNA]</scope>
</reference>
<sequence>MYAEERAYGSFDDVMEVYQQIVTESIQLKRLHFGSGCLIEFLGDSGTCETFCGGWISMICWTSDTNSMGSLTVDIGIDDGKYKTYNARGFLLCSKSITSISQNTEGRDRILTVSQENNKLQITFVTLTKVFKEHDIRNLGDPKCIEKFEKECRALDRKKHDDEHRKRSGKQKEKRKVEDTDKKKDDDRRKQEERKRNDEDKQPDKKEESDELPKEKRQKYHDMKRNLEEQSHEDGITLTSTTLVNGAVEGALPPCISIDNHEDQQHDELDKRAYAQGTNREGLSNEDNYGNFRLNKSLEQLRAKLVASSGDIVERSLLKLKECLDNVKDNLIKNECADVTGPSKCLSKTKHIEPKKQIVFSDCVRPVPVCEIKPFIDVRLFETARSPRRLRQRTRTIVGSTDGAIEQQRVISGQNRGRARGRGRGRAPRRRNSNINNSRTQTTIVIDDSSEAENFENEGSFNEDLLATTILETL</sequence>
<dbReference type="EMBL" id="U13194">
    <property type="protein sequence ID" value="AAA68470.1"/>
    <property type="status" value="ALT_SEQ"/>
    <property type="molecule type" value="Genomic_DNA"/>
</dbReference>
<dbReference type="EMBL" id="U13194">
    <property type="protein sequence ID" value="AAA68471.1"/>
    <property type="status" value="ALT_SEQ"/>
    <property type="molecule type" value="Genomic_DNA"/>
</dbReference>
<dbReference type="EMBL" id="X83413">
    <property type="protein sequence ID" value="CAA58371.2"/>
    <property type="molecule type" value="Genomic_DNA"/>
</dbReference>
<dbReference type="RefSeq" id="NP_042972.2">
    <property type="nucleotide sequence ID" value="NC_001664.2"/>
</dbReference>
<dbReference type="SMR" id="P52529"/>
<dbReference type="DNASU" id="1487960"/>
<dbReference type="KEGG" id="vg:1487960"/>
<dbReference type="Proteomes" id="UP000009295">
    <property type="component" value="Segment"/>
</dbReference>
<dbReference type="GO" id="GO:0042025">
    <property type="term" value="C:host cell nucleus"/>
    <property type="evidence" value="ECO:0007669"/>
    <property type="project" value="UniProtKB-SubCell"/>
</dbReference>
<dbReference type="InterPro" id="IPR004138">
    <property type="entry name" value="U79_P34"/>
</dbReference>
<dbReference type="Pfam" id="PF03064">
    <property type="entry name" value="U79_P34"/>
    <property type="match status" value="1"/>
</dbReference>
<gene>
    <name type="primary">U79/U80</name>
    <name type="synonym">EDRF1/EDRF2</name>
</gene>
<protein>
    <recommendedName>
        <fullName>Protein U79/U80</fullName>
    </recommendedName>
</protein>
<name>U79_HHV6U</name>
<evidence type="ECO:0000250" key="1"/>
<evidence type="ECO:0000256" key="2">
    <source>
        <dbReference type="SAM" id="MobiDB-lite"/>
    </source>
</evidence>
<evidence type="ECO:0000305" key="3"/>
<accession>P52529</accession>
<accession>Q69469</accession>
<accession>Q69563</accession>
<accession>Q76QS7</accession>
<feature type="chain" id="PRO_0000116325" description="Protein U79/U80">
    <location>
        <begin position="1"/>
        <end position="474"/>
    </location>
</feature>
<feature type="region of interest" description="Disordered" evidence="2">
    <location>
        <begin position="156"/>
        <end position="219"/>
    </location>
</feature>
<feature type="region of interest" description="Disordered" evidence="2">
    <location>
        <begin position="412"/>
        <end position="441"/>
    </location>
</feature>
<feature type="compositionally biased region" description="Basic and acidic residues" evidence="2">
    <location>
        <begin position="156"/>
        <end position="165"/>
    </location>
</feature>
<feature type="compositionally biased region" description="Basic and acidic residues" evidence="2">
    <location>
        <begin position="175"/>
        <end position="219"/>
    </location>
</feature>
<feature type="compositionally biased region" description="Basic residues" evidence="2">
    <location>
        <begin position="417"/>
        <end position="432"/>
    </location>
</feature>
<feature type="splice variant" id="VSP_034765" description="In isoform 2." evidence="3">
    <original>ALPPCISI</original>
    <variation>DEPRRSIQ</variation>
    <location>
        <begin position="251"/>
        <end position="258"/>
    </location>
</feature>
<feature type="splice variant" id="VSP_034766" description="In isoform 2." evidence="3">
    <location>
        <begin position="259"/>
        <end position="474"/>
    </location>
</feature>
<comment type="function">
    <text evidence="3">May be involved in DNA replication.</text>
</comment>
<comment type="subcellular location">
    <subcellularLocation>
        <location evidence="1">Host nucleus</location>
    </subcellularLocation>
</comment>
<comment type="alternative products">
    <event type="alternative splicing"/>
    <isoform>
        <id>P52529-1</id>
        <name>1</name>
        <sequence type="displayed"/>
    </isoform>
    <isoform>
        <id>P52529-2</id>
        <name>2</name>
        <sequence type="described" ref="VSP_034765 VSP_034766"/>
    </isoform>
    <text>The isoforms have been deduced by homology to HHV-6B.</text>
</comment>
<comment type="similarity">
    <text evidence="3">Belongs to the herpesviridae U79/UL112 family.</text>
</comment>
<comment type="sequence caution" evidence="3">
    <conflict type="erroneous gene model prediction">
        <sequence resource="EMBL-CDS" id="AAA68470"/>
    </conflict>
</comment>
<comment type="sequence caution" evidence="3">
    <conflict type="erroneous gene model prediction">
        <sequence resource="EMBL-CDS" id="AAA68471"/>
    </conflict>
</comment>
<organism>
    <name type="scientific">Human herpesvirus 6A (strain Uganda-1102)</name>
    <name type="common">HHV-6 variant A</name>
    <name type="synonym">Human B lymphotropic virus</name>
    <dbReference type="NCBI Taxonomy" id="10370"/>
    <lineage>
        <taxon>Viruses</taxon>
        <taxon>Duplodnaviria</taxon>
        <taxon>Heunggongvirae</taxon>
        <taxon>Peploviricota</taxon>
        <taxon>Herviviricetes</taxon>
        <taxon>Herpesvirales</taxon>
        <taxon>Orthoherpesviridae</taxon>
        <taxon>Betaherpesvirinae</taxon>
        <taxon>Roseolovirus</taxon>
        <taxon>Roseolovirus humanbeta6a</taxon>
        <taxon>Human betaherpesvirus 6A</taxon>
    </lineage>
</organism>